<organism>
    <name type="scientific">Streptococcus pyogenes serotype M4 (strain MGAS10750)</name>
    <dbReference type="NCBI Taxonomy" id="370554"/>
    <lineage>
        <taxon>Bacteria</taxon>
        <taxon>Bacillati</taxon>
        <taxon>Bacillota</taxon>
        <taxon>Bacilli</taxon>
        <taxon>Lactobacillales</taxon>
        <taxon>Streptococcaceae</taxon>
        <taxon>Streptococcus</taxon>
    </lineage>
</organism>
<accession>Q1J6M1</accession>
<sequence length="359" mass="40600">MNIYDQLQAVEDRYEELGELLSDPDVVSDTKRFMELSREEANTRETVTAYREYKQVIQTISDAEEMIKDASGDPELEEMAKEELKESKAAKEEYEEKLKILLLPKDPNDDKNIILEIRGAAGGDEAALFAGDLLTMYQKYAETQGWRFEVMESSVNGVGGIKEVVAMVSGQSVYSKLKYESGAHRVQRVPVTESQGRVHTSTATVLVMPEVEEVEYDIDQKDLRVDIYHASGAGGQNVNKVATAVRMVHIPTGIKVEMQEERTQQKNRDKAMKIIRARVADHFAQIAQDEQDAERKSTVGTGDRSERIRTYNFPQNRVTDHRIGLTLQKLDTILSGKMDEVIDALVMYDQTKKLESLNN</sequence>
<feature type="chain" id="PRO_0000263368" description="Peptide chain release factor 1">
    <location>
        <begin position="1"/>
        <end position="359"/>
    </location>
</feature>
<feature type="modified residue" description="N5-methylglutamine" evidence="1">
    <location>
        <position position="236"/>
    </location>
</feature>
<keyword id="KW-0963">Cytoplasm</keyword>
<keyword id="KW-0488">Methylation</keyword>
<keyword id="KW-0648">Protein biosynthesis</keyword>
<protein>
    <recommendedName>
        <fullName evidence="1">Peptide chain release factor 1</fullName>
        <shortName evidence="1">RF-1</shortName>
    </recommendedName>
</protein>
<comment type="function">
    <text evidence="1">Peptide chain release factor 1 directs the termination of translation in response to the peptide chain termination codons UAG and UAA.</text>
</comment>
<comment type="subcellular location">
    <subcellularLocation>
        <location evidence="1">Cytoplasm</location>
    </subcellularLocation>
</comment>
<comment type="PTM">
    <text evidence="1">Methylated by PrmC. Methylation increases the termination efficiency of RF1.</text>
</comment>
<comment type="similarity">
    <text evidence="1">Belongs to the prokaryotic/mitochondrial release factor family.</text>
</comment>
<evidence type="ECO:0000255" key="1">
    <source>
        <dbReference type="HAMAP-Rule" id="MF_00093"/>
    </source>
</evidence>
<proteinExistence type="inferred from homology"/>
<gene>
    <name evidence="1" type="primary">prfA</name>
    <name type="ordered locus">MGAS10750_Spy1012</name>
</gene>
<reference key="1">
    <citation type="journal article" date="2006" name="Proc. Natl. Acad. Sci. U.S.A.">
        <title>Molecular genetic anatomy of inter- and intraserotype variation in the human bacterial pathogen group A Streptococcus.</title>
        <authorList>
            <person name="Beres S.B."/>
            <person name="Richter E.W."/>
            <person name="Nagiec M.J."/>
            <person name="Sumby P."/>
            <person name="Porcella S.F."/>
            <person name="DeLeo F.R."/>
            <person name="Musser J.M."/>
        </authorList>
    </citation>
    <scope>NUCLEOTIDE SEQUENCE [LARGE SCALE GENOMIC DNA]</scope>
    <source>
        <strain>MGAS10750</strain>
    </source>
</reference>
<dbReference type="EMBL" id="CP000262">
    <property type="protein sequence ID" value="ABF37962.1"/>
    <property type="molecule type" value="Genomic_DNA"/>
</dbReference>
<dbReference type="SMR" id="Q1J6M1"/>
<dbReference type="KEGG" id="spi:MGAS10750_Spy1012"/>
<dbReference type="HOGENOM" id="CLU_036856_0_1_9"/>
<dbReference type="Proteomes" id="UP000002434">
    <property type="component" value="Chromosome"/>
</dbReference>
<dbReference type="GO" id="GO:0005737">
    <property type="term" value="C:cytoplasm"/>
    <property type="evidence" value="ECO:0007669"/>
    <property type="project" value="UniProtKB-SubCell"/>
</dbReference>
<dbReference type="GO" id="GO:0016149">
    <property type="term" value="F:translation release factor activity, codon specific"/>
    <property type="evidence" value="ECO:0007669"/>
    <property type="project" value="UniProtKB-UniRule"/>
</dbReference>
<dbReference type="FunFam" id="3.30.160.20:FF:000027">
    <property type="entry name" value="Peptide chain release factor 1"/>
    <property type="match status" value="1"/>
</dbReference>
<dbReference type="FunFam" id="3.30.70.1660:FF:000002">
    <property type="entry name" value="Peptide chain release factor 1"/>
    <property type="match status" value="1"/>
</dbReference>
<dbReference type="FunFam" id="3.30.70.1660:FF:000004">
    <property type="entry name" value="Peptide chain release factor 1"/>
    <property type="match status" value="1"/>
</dbReference>
<dbReference type="Gene3D" id="3.30.160.20">
    <property type="match status" value="1"/>
</dbReference>
<dbReference type="Gene3D" id="3.30.70.1660">
    <property type="match status" value="2"/>
</dbReference>
<dbReference type="Gene3D" id="6.10.140.1950">
    <property type="match status" value="1"/>
</dbReference>
<dbReference type="HAMAP" id="MF_00093">
    <property type="entry name" value="Rel_fac_1"/>
    <property type="match status" value="1"/>
</dbReference>
<dbReference type="InterPro" id="IPR005139">
    <property type="entry name" value="PCRF"/>
</dbReference>
<dbReference type="InterPro" id="IPR000352">
    <property type="entry name" value="Pep_chain_release_fac_I"/>
</dbReference>
<dbReference type="InterPro" id="IPR045853">
    <property type="entry name" value="Pep_chain_release_fac_I_sf"/>
</dbReference>
<dbReference type="InterPro" id="IPR050057">
    <property type="entry name" value="Prokaryotic/Mito_RF"/>
</dbReference>
<dbReference type="InterPro" id="IPR004373">
    <property type="entry name" value="RF-1"/>
</dbReference>
<dbReference type="NCBIfam" id="TIGR00019">
    <property type="entry name" value="prfA"/>
    <property type="match status" value="1"/>
</dbReference>
<dbReference type="NCBIfam" id="NF001859">
    <property type="entry name" value="PRK00591.1"/>
    <property type="match status" value="1"/>
</dbReference>
<dbReference type="PANTHER" id="PTHR43804">
    <property type="entry name" value="LD18447P"/>
    <property type="match status" value="1"/>
</dbReference>
<dbReference type="PANTHER" id="PTHR43804:SF7">
    <property type="entry name" value="LD18447P"/>
    <property type="match status" value="1"/>
</dbReference>
<dbReference type="Pfam" id="PF03462">
    <property type="entry name" value="PCRF"/>
    <property type="match status" value="1"/>
</dbReference>
<dbReference type="Pfam" id="PF00472">
    <property type="entry name" value="RF-1"/>
    <property type="match status" value="1"/>
</dbReference>
<dbReference type="SMART" id="SM00937">
    <property type="entry name" value="PCRF"/>
    <property type="match status" value="1"/>
</dbReference>
<dbReference type="SUPFAM" id="SSF75620">
    <property type="entry name" value="Release factor"/>
    <property type="match status" value="1"/>
</dbReference>
<dbReference type="PROSITE" id="PS00745">
    <property type="entry name" value="RF_PROK_I"/>
    <property type="match status" value="1"/>
</dbReference>
<name>RF1_STRPF</name>